<proteinExistence type="inferred from homology"/>
<gene>
    <name evidence="1" type="primary">purH</name>
    <name type="ordered locus">WIGBR5110</name>
</gene>
<feature type="chain" id="PRO_0000192153" description="Bifunctional purine biosynthesis protein PurH">
    <location>
        <begin position="1"/>
        <end position="529"/>
    </location>
</feature>
<feature type="domain" description="MGS-like" evidence="2">
    <location>
        <begin position="1"/>
        <end position="148"/>
    </location>
</feature>
<accession>Q8D244</accession>
<protein>
    <recommendedName>
        <fullName evidence="1">Bifunctional purine biosynthesis protein PurH</fullName>
    </recommendedName>
    <domain>
        <recommendedName>
            <fullName evidence="1">Phosphoribosylaminoimidazolecarboxamide formyltransferase</fullName>
            <ecNumber evidence="1">2.1.2.3</ecNumber>
        </recommendedName>
        <alternativeName>
            <fullName evidence="1">AICAR transformylase</fullName>
        </alternativeName>
    </domain>
    <domain>
        <recommendedName>
            <fullName evidence="1">IMP cyclohydrolase</fullName>
            <ecNumber evidence="1">3.5.4.10</ecNumber>
        </recommendedName>
        <alternativeName>
            <fullName evidence="1">ATIC</fullName>
        </alternativeName>
        <alternativeName>
            <fullName evidence="1">IMP synthase</fullName>
        </alternativeName>
        <alternativeName>
            <fullName evidence="1">Inosinicase</fullName>
        </alternativeName>
    </domain>
</protein>
<keyword id="KW-0378">Hydrolase</keyword>
<keyword id="KW-0511">Multifunctional enzyme</keyword>
<keyword id="KW-0658">Purine biosynthesis</keyword>
<keyword id="KW-1185">Reference proteome</keyword>
<keyword id="KW-0808">Transferase</keyword>
<reference key="1">
    <citation type="journal article" date="2002" name="Nat. Genet.">
        <title>Genome sequence of the endocellular obligate symbiont of tsetse flies, Wigglesworthia glossinidia.</title>
        <authorList>
            <person name="Akman L."/>
            <person name="Yamashita A."/>
            <person name="Watanabe H."/>
            <person name="Oshima K."/>
            <person name="Shiba T."/>
            <person name="Hattori M."/>
            <person name="Aksoy S."/>
        </authorList>
    </citation>
    <scope>NUCLEOTIDE SEQUENCE [LARGE SCALE GENOMIC DNA]</scope>
</reference>
<organism>
    <name type="scientific">Wigglesworthia glossinidia brevipalpis</name>
    <dbReference type="NCBI Taxonomy" id="36870"/>
    <lineage>
        <taxon>Bacteria</taxon>
        <taxon>Pseudomonadati</taxon>
        <taxon>Pseudomonadota</taxon>
        <taxon>Gammaproteobacteria</taxon>
        <taxon>Enterobacterales</taxon>
        <taxon>Erwiniaceae</taxon>
        <taxon>Wigglesworthia</taxon>
    </lineage>
</organism>
<sequence>MEQSFLPIRCALISVSDKTGIFSLAKNLIKHKVKLITTSGTYKYLLEKGIFSTSVSEYINHPEIINGRVKTLHPKIHGGILSNNKNINENKNLNIKKIDMVITNFYPFKKKVKKENIKIENIIDNIDIGGVALARSAAKNYKYVTVVVNINQYSKLSSEMDKNSGSVSFKTRFYFSTLAFQYSYSYDKEIFNYFNKIYFKEIELKKNLKNKKFPELFSISFSKKEDVLYGENYHQKAAFYTDPVIHPGTVPFSIQRQGKKLSYNNIVDSDIAINCVMNFSEIACVIVKHSTPCGVSSGKNIIDAYRSAYYSDPDSAFGGIISFNRPLTIEAAEFIINKQFVEIIIAPVIEKDALLTLKSKSKIIVLECGYLSKNFLLNFKKVNCGLLLQDSDNKILKEKDIKIVSKRQPSKLEIESSIFIWKIIKFIKSNAIIYGKNKRTLGIGSGQTSRIFSTRIAAYKAIDQGFSLKGSVMASDAFFPFRDSIDFASKFGVSCIIQPGGSINDDKIISAVDENNMSMIFTNTRQFSH</sequence>
<dbReference type="EC" id="2.1.2.3" evidence="1"/>
<dbReference type="EC" id="3.5.4.10" evidence="1"/>
<dbReference type="EMBL" id="BA000021">
    <property type="protein sequence ID" value="BAC24657.1"/>
    <property type="molecule type" value="Genomic_DNA"/>
</dbReference>
<dbReference type="SMR" id="Q8D244"/>
<dbReference type="STRING" id="36870.gene:10369015"/>
<dbReference type="KEGG" id="wbr:purH"/>
<dbReference type="eggNOG" id="COG0138">
    <property type="taxonomic scope" value="Bacteria"/>
</dbReference>
<dbReference type="HOGENOM" id="CLU_016316_5_2_6"/>
<dbReference type="OrthoDB" id="9802065at2"/>
<dbReference type="UniPathway" id="UPA00074">
    <property type="reaction ID" value="UER00133"/>
</dbReference>
<dbReference type="UniPathway" id="UPA00074">
    <property type="reaction ID" value="UER00135"/>
</dbReference>
<dbReference type="Proteomes" id="UP000000562">
    <property type="component" value="Chromosome"/>
</dbReference>
<dbReference type="GO" id="GO:0005829">
    <property type="term" value="C:cytosol"/>
    <property type="evidence" value="ECO:0007669"/>
    <property type="project" value="TreeGrafter"/>
</dbReference>
<dbReference type="GO" id="GO:0003937">
    <property type="term" value="F:IMP cyclohydrolase activity"/>
    <property type="evidence" value="ECO:0007669"/>
    <property type="project" value="UniProtKB-UniRule"/>
</dbReference>
<dbReference type="GO" id="GO:0004643">
    <property type="term" value="F:phosphoribosylaminoimidazolecarboxamide formyltransferase activity"/>
    <property type="evidence" value="ECO:0007669"/>
    <property type="project" value="UniProtKB-UniRule"/>
</dbReference>
<dbReference type="GO" id="GO:0006189">
    <property type="term" value="P:'de novo' IMP biosynthetic process"/>
    <property type="evidence" value="ECO:0007669"/>
    <property type="project" value="UniProtKB-UniRule"/>
</dbReference>
<dbReference type="CDD" id="cd01421">
    <property type="entry name" value="IMPCH"/>
    <property type="match status" value="1"/>
</dbReference>
<dbReference type="FunFam" id="3.40.140.20:FF:000001">
    <property type="entry name" value="Bifunctional purine biosynthesis protein PurH"/>
    <property type="match status" value="1"/>
</dbReference>
<dbReference type="FunFam" id="3.40.50.1380:FF:000001">
    <property type="entry name" value="Bifunctional purine biosynthesis protein PurH"/>
    <property type="match status" value="1"/>
</dbReference>
<dbReference type="Gene3D" id="3.40.140.20">
    <property type="match status" value="2"/>
</dbReference>
<dbReference type="Gene3D" id="3.40.50.1380">
    <property type="entry name" value="Methylglyoxal synthase-like domain"/>
    <property type="match status" value="1"/>
</dbReference>
<dbReference type="HAMAP" id="MF_00139">
    <property type="entry name" value="PurH"/>
    <property type="match status" value="1"/>
</dbReference>
<dbReference type="InterPro" id="IPR024051">
    <property type="entry name" value="AICAR_Tfase_dup_dom_sf"/>
</dbReference>
<dbReference type="InterPro" id="IPR016193">
    <property type="entry name" value="Cytidine_deaminase-like"/>
</dbReference>
<dbReference type="InterPro" id="IPR011607">
    <property type="entry name" value="MGS-like_dom"/>
</dbReference>
<dbReference type="InterPro" id="IPR036914">
    <property type="entry name" value="MGS-like_dom_sf"/>
</dbReference>
<dbReference type="InterPro" id="IPR002695">
    <property type="entry name" value="PurH-like"/>
</dbReference>
<dbReference type="NCBIfam" id="NF002049">
    <property type="entry name" value="PRK00881.1"/>
    <property type="match status" value="1"/>
</dbReference>
<dbReference type="NCBIfam" id="TIGR00355">
    <property type="entry name" value="purH"/>
    <property type="match status" value="1"/>
</dbReference>
<dbReference type="PANTHER" id="PTHR11692:SF0">
    <property type="entry name" value="BIFUNCTIONAL PURINE BIOSYNTHESIS PROTEIN ATIC"/>
    <property type="match status" value="1"/>
</dbReference>
<dbReference type="PANTHER" id="PTHR11692">
    <property type="entry name" value="BIFUNCTIONAL PURINE BIOSYNTHESIS PROTEIN PURH"/>
    <property type="match status" value="1"/>
</dbReference>
<dbReference type="Pfam" id="PF01808">
    <property type="entry name" value="AICARFT_IMPCHas"/>
    <property type="match status" value="1"/>
</dbReference>
<dbReference type="Pfam" id="PF02142">
    <property type="entry name" value="MGS"/>
    <property type="match status" value="1"/>
</dbReference>
<dbReference type="PIRSF" id="PIRSF000414">
    <property type="entry name" value="AICARFT_IMPCHas"/>
    <property type="match status" value="1"/>
</dbReference>
<dbReference type="SMART" id="SM00798">
    <property type="entry name" value="AICARFT_IMPCHas"/>
    <property type="match status" value="1"/>
</dbReference>
<dbReference type="SMART" id="SM00851">
    <property type="entry name" value="MGS"/>
    <property type="match status" value="1"/>
</dbReference>
<dbReference type="SUPFAM" id="SSF53927">
    <property type="entry name" value="Cytidine deaminase-like"/>
    <property type="match status" value="1"/>
</dbReference>
<dbReference type="SUPFAM" id="SSF52335">
    <property type="entry name" value="Methylglyoxal synthase-like"/>
    <property type="match status" value="1"/>
</dbReference>
<dbReference type="PROSITE" id="PS51855">
    <property type="entry name" value="MGS"/>
    <property type="match status" value="1"/>
</dbReference>
<evidence type="ECO:0000255" key="1">
    <source>
        <dbReference type="HAMAP-Rule" id="MF_00139"/>
    </source>
</evidence>
<evidence type="ECO:0000255" key="2">
    <source>
        <dbReference type="PROSITE-ProRule" id="PRU01202"/>
    </source>
</evidence>
<name>PUR9_WIGBR</name>
<comment type="catalytic activity">
    <reaction evidence="1">
        <text>(6R)-10-formyltetrahydrofolate + 5-amino-1-(5-phospho-beta-D-ribosyl)imidazole-4-carboxamide = 5-formamido-1-(5-phospho-D-ribosyl)imidazole-4-carboxamide + (6S)-5,6,7,8-tetrahydrofolate</text>
        <dbReference type="Rhea" id="RHEA:22192"/>
        <dbReference type="ChEBI" id="CHEBI:57453"/>
        <dbReference type="ChEBI" id="CHEBI:58467"/>
        <dbReference type="ChEBI" id="CHEBI:58475"/>
        <dbReference type="ChEBI" id="CHEBI:195366"/>
        <dbReference type="EC" id="2.1.2.3"/>
    </reaction>
</comment>
<comment type="catalytic activity">
    <reaction evidence="1">
        <text>IMP + H2O = 5-formamido-1-(5-phospho-D-ribosyl)imidazole-4-carboxamide</text>
        <dbReference type="Rhea" id="RHEA:18445"/>
        <dbReference type="ChEBI" id="CHEBI:15377"/>
        <dbReference type="ChEBI" id="CHEBI:58053"/>
        <dbReference type="ChEBI" id="CHEBI:58467"/>
        <dbReference type="EC" id="3.5.4.10"/>
    </reaction>
</comment>
<comment type="pathway">
    <text evidence="1">Purine metabolism; IMP biosynthesis via de novo pathway; 5-formamido-1-(5-phospho-D-ribosyl)imidazole-4-carboxamide from 5-amino-1-(5-phospho-D-ribosyl)imidazole-4-carboxamide (10-formyl THF route): step 1/1.</text>
</comment>
<comment type="pathway">
    <text evidence="1">Purine metabolism; IMP biosynthesis via de novo pathway; IMP from 5-formamido-1-(5-phospho-D-ribosyl)imidazole-4-carboxamide: step 1/1.</text>
</comment>
<comment type="domain">
    <text evidence="1">The IMP cyclohydrolase activity resides in the N-terminal region.</text>
</comment>
<comment type="similarity">
    <text evidence="1">Belongs to the PurH family.</text>
</comment>